<protein>
    <recommendedName>
        <fullName evidence="1">Putative glutamate--cysteine ligase 2</fullName>
        <ecNumber evidence="1">6.3.2.2</ecNumber>
    </recommendedName>
    <alternativeName>
        <fullName evidence="1">Gamma-glutamylcysteine synthetase 2</fullName>
        <shortName evidence="1">GCS 2</shortName>
        <shortName evidence="1">Gamma-GCS 2</shortName>
    </alternativeName>
</protein>
<organism>
    <name type="scientific">Burkholderia mallei (strain ATCC 23344)</name>
    <dbReference type="NCBI Taxonomy" id="243160"/>
    <lineage>
        <taxon>Bacteria</taxon>
        <taxon>Pseudomonadati</taxon>
        <taxon>Pseudomonadota</taxon>
        <taxon>Betaproteobacteria</taxon>
        <taxon>Burkholderiales</taxon>
        <taxon>Burkholderiaceae</taxon>
        <taxon>Burkholderia</taxon>
        <taxon>pseudomallei group</taxon>
    </lineage>
</organism>
<evidence type="ECO:0000255" key="1">
    <source>
        <dbReference type="HAMAP-Rule" id="MF_01609"/>
    </source>
</evidence>
<reference key="1">
    <citation type="journal article" date="2004" name="Proc. Natl. Acad. Sci. U.S.A.">
        <title>Structural flexibility in the Burkholderia mallei genome.</title>
        <authorList>
            <person name="Nierman W.C."/>
            <person name="DeShazer D."/>
            <person name="Kim H.S."/>
            <person name="Tettelin H."/>
            <person name="Nelson K.E."/>
            <person name="Feldblyum T.V."/>
            <person name="Ulrich R.L."/>
            <person name="Ronning C.M."/>
            <person name="Brinkac L.M."/>
            <person name="Daugherty S.C."/>
            <person name="Davidsen T.D."/>
            <person name="DeBoy R.T."/>
            <person name="Dimitrov G."/>
            <person name="Dodson R.J."/>
            <person name="Durkin A.S."/>
            <person name="Gwinn M.L."/>
            <person name="Haft D.H."/>
            <person name="Khouri H.M."/>
            <person name="Kolonay J.F."/>
            <person name="Madupu R."/>
            <person name="Mohammoud Y."/>
            <person name="Nelson W.C."/>
            <person name="Radune D."/>
            <person name="Romero C.M."/>
            <person name="Sarria S."/>
            <person name="Selengut J."/>
            <person name="Shamblin C."/>
            <person name="Sullivan S.A."/>
            <person name="White O."/>
            <person name="Yu Y."/>
            <person name="Zafar N."/>
            <person name="Zhou L."/>
            <person name="Fraser C.M."/>
        </authorList>
    </citation>
    <scope>NUCLEOTIDE SEQUENCE [LARGE SCALE GENOMIC DNA]</scope>
    <source>
        <strain>ATCC 23344</strain>
    </source>
</reference>
<dbReference type="EC" id="6.3.2.2" evidence="1"/>
<dbReference type="EMBL" id="CP000010">
    <property type="protein sequence ID" value="AAU47995.1"/>
    <property type="molecule type" value="Genomic_DNA"/>
</dbReference>
<dbReference type="RefSeq" id="WP_004195787.1">
    <property type="nucleotide sequence ID" value="NC_006348.1"/>
</dbReference>
<dbReference type="RefSeq" id="YP_104424.1">
    <property type="nucleotide sequence ID" value="NC_006348.1"/>
</dbReference>
<dbReference type="SMR" id="Q62FV3"/>
<dbReference type="KEGG" id="bma:BMA2917"/>
<dbReference type="PATRIC" id="fig|243160.12.peg.2987"/>
<dbReference type="eggNOG" id="COG2170">
    <property type="taxonomic scope" value="Bacteria"/>
</dbReference>
<dbReference type="HOGENOM" id="CLU_044848_1_1_4"/>
<dbReference type="Proteomes" id="UP000006693">
    <property type="component" value="Chromosome 1"/>
</dbReference>
<dbReference type="GO" id="GO:0005524">
    <property type="term" value="F:ATP binding"/>
    <property type="evidence" value="ECO:0007669"/>
    <property type="project" value="UniProtKB-KW"/>
</dbReference>
<dbReference type="GO" id="GO:0004357">
    <property type="term" value="F:glutamate-cysteine ligase activity"/>
    <property type="evidence" value="ECO:0007669"/>
    <property type="project" value="UniProtKB-EC"/>
</dbReference>
<dbReference type="GO" id="GO:0042398">
    <property type="term" value="P:modified amino acid biosynthetic process"/>
    <property type="evidence" value="ECO:0007669"/>
    <property type="project" value="InterPro"/>
</dbReference>
<dbReference type="Gene3D" id="3.30.590.20">
    <property type="match status" value="1"/>
</dbReference>
<dbReference type="HAMAP" id="MF_01609">
    <property type="entry name" value="Glu_cys_ligase_2"/>
    <property type="match status" value="1"/>
</dbReference>
<dbReference type="InterPro" id="IPR050141">
    <property type="entry name" value="GCL_type2/YbdK_subfam"/>
</dbReference>
<dbReference type="InterPro" id="IPR006336">
    <property type="entry name" value="GCS2"/>
</dbReference>
<dbReference type="InterPro" id="IPR014746">
    <property type="entry name" value="Gln_synth/guanido_kin_cat_dom"/>
</dbReference>
<dbReference type="InterPro" id="IPR011793">
    <property type="entry name" value="YbdK"/>
</dbReference>
<dbReference type="NCBIfam" id="TIGR02050">
    <property type="entry name" value="gshA_cyan_rel"/>
    <property type="match status" value="1"/>
</dbReference>
<dbReference type="NCBIfam" id="NF010040">
    <property type="entry name" value="PRK13516.1"/>
    <property type="match status" value="1"/>
</dbReference>
<dbReference type="PANTHER" id="PTHR36510">
    <property type="entry name" value="GLUTAMATE--CYSTEINE LIGASE 2-RELATED"/>
    <property type="match status" value="1"/>
</dbReference>
<dbReference type="PANTHER" id="PTHR36510:SF1">
    <property type="entry name" value="GLUTAMATE--CYSTEINE LIGASE 2-RELATED"/>
    <property type="match status" value="1"/>
</dbReference>
<dbReference type="Pfam" id="PF04107">
    <property type="entry name" value="GCS2"/>
    <property type="match status" value="1"/>
</dbReference>
<dbReference type="SUPFAM" id="SSF55931">
    <property type="entry name" value="Glutamine synthetase/guanido kinase"/>
    <property type="match status" value="1"/>
</dbReference>
<name>GCS2_BURMA</name>
<keyword id="KW-0067">ATP-binding</keyword>
<keyword id="KW-0436">Ligase</keyword>
<keyword id="KW-0547">Nucleotide-binding</keyword>
<keyword id="KW-1185">Reference proteome</keyword>
<sequence length="371" mass="41779">MALETFVNSEPFTFGVELEIQIVNTHNYDLTKAASDLMRLIKDAKFPGNITPEITESMIELSTGICRTHDQALGELHAIRDTLVSAADQLNVGLCGGGTHAFQQWSERQIFDAPRFQYISELYGYLAKQFTVFGQHVHIGCPDADSALFLLHSMSRFIPHFIALSASSPYVQNVDTGFHSARLNSVFAFPLSGRAPFVLTWHGFEEYFTKMVNTGVVNSMKDFYWDIRPKPGYGTIEVRVMDTPLSVDRAAAIACYIQTLARYLLIDRPLKLSEDDYLVYTFNRFEACRFGLEGTCVNPQTGERRTIAEDILDTLDRIAPHAAALGSRAALDEIGALAKARVNDASWLRTIFKQEKSLNETVRQQCLRWRE</sequence>
<feature type="chain" id="PRO_0000218189" description="Putative glutamate--cysteine ligase 2">
    <location>
        <begin position="1"/>
        <end position="371"/>
    </location>
</feature>
<proteinExistence type="inferred from homology"/>
<gene>
    <name type="ordered locus">BMA2917</name>
</gene>
<comment type="function">
    <text evidence="1">ATP-dependent carboxylate-amine ligase which exhibits weak glutamate--cysteine ligase activity.</text>
</comment>
<comment type="catalytic activity">
    <reaction evidence="1">
        <text>L-cysteine + L-glutamate + ATP = gamma-L-glutamyl-L-cysteine + ADP + phosphate + H(+)</text>
        <dbReference type="Rhea" id="RHEA:13285"/>
        <dbReference type="ChEBI" id="CHEBI:15378"/>
        <dbReference type="ChEBI" id="CHEBI:29985"/>
        <dbReference type="ChEBI" id="CHEBI:30616"/>
        <dbReference type="ChEBI" id="CHEBI:35235"/>
        <dbReference type="ChEBI" id="CHEBI:43474"/>
        <dbReference type="ChEBI" id="CHEBI:58173"/>
        <dbReference type="ChEBI" id="CHEBI:456216"/>
        <dbReference type="EC" id="6.3.2.2"/>
    </reaction>
</comment>
<comment type="similarity">
    <text evidence="1">Belongs to the glutamate--cysteine ligase type 2 family. YbdK subfamily.</text>
</comment>
<accession>Q62FV3</accession>